<dbReference type="EMBL" id="AE016879">
    <property type="protein sequence ID" value="AAP25345.1"/>
    <property type="molecule type" value="Genomic_DNA"/>
</dbReference>
<dbReference type="EMBL" id="AE017334">
    <property type="protein sequence ID" value="AAT30498.1"/>
    <property type="molecule type" value="Genomic_DNA"/>
</dbReference>
<dbReference type="EMBL" id="AE017225">
    <property type="protein sequence ID" value="AAT53615.1"/>
    <property type="molecule type" value="Genomic_DNA"/>
</dbReference>
<dbReference type="RefSeq" id="NP_843859.1">
    <property type="nucleotide sequence ID" value="NC_003997.3"/>
</dbReference>
<dbReference type="RefSeq" id="WP_000665392.1">
    <property type="nucleotide sequence ID" value="NZ_WXXJ01000001.1"/>
</dbReference>
<dbReference type="RefSeq" id="YP_027564.1">
    <property type="nucleotide sequence ID" value="NC_005945.1"/>
</dbReference>
<dbReference type="SMR" id="Q81T85"/>
<dbReference type="STRING" id="261594.GBAA_1402"/>
<dbReference type="DNASU" id="1084137"/>
<dbReference type="GeneID" id="45021381"/>
<dbReference type="KEGG" id="ban:BA_1402"/>
<dbReference type="KEGG" id="banh:HYU01_07110"/>
<dbReference type="KEGG" id="bar:GBAA_1402"/>
<dbReference type="KEGG" id="bat:BAS1295"/>
<dbReference type="PATRIC" id="fig|198094.11.peg.1375"/>
<dbReference type="eggNOG" id="COG0534">
    <property type="taxonomic scope" value="Bacteria"/>
</dbReference>
<dbReference type="HOGENOM" id="CLU_012893_6_0_9"/>
<dbReference type="OMA" id="WFFVWKL"/>
<dbReference type="OrthoDB" id="9780160at2"/>
<dbReference type="Proteomes" id="UP000000427">
    <property type="component" value="Chromosome"/>
</dbReference>
<dbReference type="Proteomes" id="UP000000594">
    <property type="component" value="Chromosome"/>
</dbReference>
<dbReference type="GO" id="GO:0005886">
    <property type="term" value="C:plasma membrane"/>
    <property type="evidence" value="ECO:0007669"/>
    <property type="project" value="UniProtKB-SubCell"/>
</dbReference>
<dbReference type="GO" id="GO:0015297">
    <property type="term" value="F:antiporter activity"/>
    <property type="evidence" value="ECO:0007669"/>
    <property type="project" value="UniProtKB-KW"/>
</dbReference>
<dbReference type="GO" id="GO:0042910">
    <property type="term" value="F:xenobiotic transmembrane transporter activity"/>
    <property type="evidence" value="ECO:0007669"/>
    <property type="project" value="InterPro"/>
</dbReference>
<dbReference type="GO" id="GO:0006811">
    <property type="term" value="P:monoatomic ion transport"/>
    <property type="evidence" value="ECO:0007669"/>
    <property type="project" value="UniProtKB-KW"/>
</dbReference>
<dbReference type="CDD" id="cd13131">
    <property type="entry name" value="MATE_NorM_like"/>
    <property type="match status" value="1"/>
</dbReference>
<dbReference type="InterPro" id="IPR002528">
    <property type="entry name" value="MATE_fam"/>
</dbReference>
<dbReference type="InterPro" id="IPR050222">
    <property type="entry name" value="MATE_MdtK"/>
</dbReference>
<dbReference type="InterPro" id="IPR048279">
    <property type="entry name" value="MdtK-like"/>
</dbReference>
<dbReference type="NCBIfam" id="TIGR00797">
    <property type="entry name" value="matE"/>
    <property type="match status" value="1"/>
</dbReference>
<dbReference type="PANTHER" id="PTHR43298:SF2">
    <property type="entry name" value="FMN_FAD EXPORTER YEEO-RELATED"/>
    <property type="match status" value="1"/>
</dbReference>
<dbReference type="PANTHER" id="PTHR43298">
    <property type="entry name" value="MULTIDRUG RESISTANCE PROTEIN NORM-RELATED"/>
    <property type="match status" value="1"/>
</dbReference>
<dbReference type="Pfam" id="PF01554">
    <property type="entry name" value="MatE"/>
    <property type="match status" value="2"/>
</dbReference>
<dbReference type="PIRSF" id="PIRSF006603">
    <property type="entry name" value="DinF"/>
    <property type="match status" value="1"/>
</dbReference>
<proteinExistence type="inferred from homology"/>
<gene>
    <name type="primary">norM</name>
    <name type="ordered locus">BA_1402</name>
    <name type="ordered locus">GBAA_1402</name>
    <name type="ordered locus">BAS1295</name>
</gene>
<sequence length="453" mass="49810">MKETNSFSQKLKQFVLLFFPIFVTQMSLFAMSFFDTTMSGHASPIDLAGVAIGTSIWIPVSTGLTGILMATTPIVAQLVGSKKKEDVPHVIIQAVYLAICASFVVILIGLFTVTPILNGMRLEEPVERIAAQFLSIIAIGIIPLFTYTVLRGFIDALGKTRTTMIITLLSLPINVVLNYVLIFGNFGFPKLGGVGAAIASAATYWCILIITVMIIRTKEPFASFNIFKQLYRPSLSSWKEFLKLGVPIGFAIFFETSIFAAVTLMMSNFSTTTIAAHQAAMNFASLLYMTPLSLAMAMTIAVGFEVGAKRYNNAKQYGFIGIGLALAFALLYSILLYFFDDEIASIYTTDIQVHHLAKEFLIFAILFQISDAIATPVQGALRGYKDVNVALIMTLIAYWVIGLPLGYILATYTDWAAKGYWIGLIIGLAFGATFLLIRLFQVQRKYTTQNSRS</sequence>
<reference key="1">
    <citation type="journal article" date="2003" name="Nature">
        <title>The genome sequence of Bacillus anthracis Ames and comparison to closely related bacteria.</title>
        <authorList>
            <person name="Read T.D."/>
            <person name="Peterson S.N."/>
            <person name="Tourasse N.J."/>
            <person name="Baillie L.W."/>
            <person name="Paulsen I.T."/>
            <person name="Nelson K.E."/>
            <person name="Tettelin H."/>
            <person name="Fouts D.E."/>
            <person name="Eisen J.A."/>
            <person name="Gill S.R."/>
            <person name="Holtzapple E.K."/>
            <person name="Okstad O.A."/>
            <person name="Helgason E."/>
            <person name="Rilstone J."/>
            <person name="Wu M."/>
            <person name="Kolonay J.F."/>
            <person name="Beanan M.J."/>
            <person name="Dodson R.J."/>
            <person name="Brinkac L.M."/>
            <person name="Gwinn M.L."/>
            <person name="DeBoy R.T."/>
            <person name="Madpu R."/>
            <person name="Daugherty S.C."/>
            <person name="Durkin A.S."/>
            <person name="Haft D.H."/>
            <person name="Nelson W.C."/>
            <person name="Peterson J.D."/>
            <person name="Pop M."/>
            <person name="Khouri H.M."/>
            <person name="Radune D."/>
            <person name="Benton J.L."/>
            <person name="Mahamoud Y."/>
            <person name="Jiang L."/>
            <person name="Hance I.R."/>
            <person name="Weidman J.F."/>
            <person name="Berry K.J."/>
            <person name="Plaut R.D."/>
            <person name="Wolf A.M."/>
            <person name="Watkins K.L."/>
            <person name="Nierman W.C."/>
            <person name="Hazen A."/>
            <person name="Cline R.T."/>
            <person name="Redmond C."/>
            <person name="Thwaite J.E."/>
            <person name="White O."/>
            <person name="Salzberg S.L."/>
            <person name="Thomason B."/>
            <person name="Friedlander A.M."/>
            <person name="Koehler T.M."/>
            <person name="Hanna P.C."/>
            <person name="Kolstoe A.-B."/>
            <person name="Fraser C.M."/>
        </authorList>
    </citation>
    <scope>NUCLEOTIDE SEQUENCE [LARGE SCALE GENOMIC DNA]</scope>
    <source>
        <strain>Ames / isolate Porton</strain>
    </source>
</reference>
<reference key="2">
    <citation type="journal article" date="2009" name="J. Bacteriol.">
        <title>The complete genome sequence of Bacillus anthracis Ames 'Ancestor'.</title>
        <authorList>
            <person name="Ravel J."/>
            <person name="Jiang L."/>
            <person name="Stanley S.T."/>
            <person name="Wilson M.R."/>
            <person name="Decker R.S."/>
            <person name="Read T.D."/>
            <person name="Worsham P."/>
            <person name="Keim P.S."/>
            <person name="Salzberg S.L."/>
            <person name="Fraser-Liggett C.M."/>
            <person name="Rasko D.A."/>
        </authorList>
    </citation>
    <scope>NUCLEOTIDE SEQUENCE [LARGE SCALE GENOMIC DNA]</scope>
    <source>
        <strain>Ames ancestor</strain>
    </source>
</reference>
<reference key="3">
    <citation type="submission" date="2004-01" db="EMBL/GenBank/DDBJ databases">
        <title>Complete genome sequence of Bacillus anthracis Sterne.</title>
        <authorList>
            <person name="Brettin T.S."/>
            <person name="Bruce D."/>
            <person name="Challacombe J.F."/>
            <person name="Gilna P."/>
            <person name="Han C."/>
            <person name="Hill K."/>
            <person name="Hitchcock P."/>
            <person name="Jackson P."/>
            <person name="Keim P."/>
            <person name="Longmire J."/>
            <person name="Lucas S."/>
            <person name="Okinaka R."/>
            <person name="Richardson P."/>
            <person name="Rubin E."/>
            <person name="Tice H."/>
        </authorList>
    </citation>
    <scope>NUCLEOTIDE SEQUENCE [LARGE SCALE GENOMIC DNA]</scope>
    <source>
        <strain>Sterne</strain>
    </source>
</reference>
<evidence type="ECO:0000250" key="1"/>
<evidence type="ECO:0000255" key="2"/>
<evidence type="ECO:0000305" key="3"/>
<keyword id="KW-0050">Antiport</keyword>
<keyword id="KW-1003">Cell membrane</keyword>
<keyword id="KW-0406">Ion transport</keyword>
<keyword id="KW-0472">Membrane</keyword>
<keyword id="KW-1185">Reference proteome</keyword>
<keyword id="KW-0812">Transmembrane</keyword>
<keyword id="KW-1133">Transmembrane helix</keyword>
<keyword id="KW-0813">Transport</keyword>
<organism>
    <name type="scientific">Bacillus anthracis</name>
    <dbReference type="NCBI Taxonomy" id="1392"/>
    <lineage>
        <taxon>Bacteria</taxon>
        <taxon>Bacillati</taxon>
        <taxon>Bacillota</taxon>
        <taxon>Bacilli</taxon>
        <taxon>Bacillales</taxon>
        <taxon>Bacillaceae</taxon>
        <taxon>Bacillus</taxon>
        <taxon>Bacillus cereus group</taxon>
    </lineage>
</organism>
<name>NORM_BACAN</name>
<comment type="function">
    <text evidence="1">Multidrug efflux pump.</text>
</comment>
<comment type="subcellular location">
    <subcellularLocation>
        <location evidence="1">Cell membrane</location>
        <topology evidence="1">Multi-pass membrane protein</topology>
    </subcellularLocation>
</comment>
<comment type="similarity">
    <text evidence="3">Belongs to the multi antimicrobial extrusion (MATE) (TC 2.A.66.1) family.</text>
</comment>
<protein>
    <recommendedName>
        <fullName>Probable multidrug resistance protein NorM</fullName>
    </recommendedName>
    <alternativeName>
        <fullName>Multidrug-efflux transporter</fullName>
    </alternativeName>
</protein>
<accession>Q81T85</accession>
<accession>Q6I1G6</accession>
<accession>Q6KVB3</accession>
<feature type="chain" id="PRO_0000164197" description="Probable multidrug resistance protein NorM">
    <location>
        <begin position="1"/>
        <end position="453"/>
    </location>
</feature>
<feature type="transmembrane region" description="Helical" evidence="2">
    <location>
        <begin position="13"/>
        <end position="34"/>
    </location>
</feature>
<feature type="transmembrane region" description="Helical" evidence="2">
    <location>
        <begin position="49"/>
        <end position="71"/>
    </location>
</feature>
<feature type="transmembrane region" description="Helical" evidence="2">
    <location>
        <begin position="92"/>
        <end position="114"/>
    </location>
</feature>
<feature type="transmembrane region" description="Helical" evidence="2">
    <location>
        <begin position="129"/>
        <end position="151"/>
    </location>
</feature>
<feature type="transmembrane region" description="Helical" evidence="2">
    <location>
        <begin position="164"/>
        <end position="183"/>
    </location>
</feature>
<feature type="transmembrane region" description="Helical" evidence="2">
    <location>
        <begin position="193"/>
        <end position="215"/>
    </location>
</feature>
<feature type="transmembrane region" description="Helical" evidence="2">
    <location>
        <begin position="244"/>
        <end position="266"/>
    </location>
</feature>
<feature type="transmembrane region" description="Helical" evidence="2">
    <location>
        <begin position="286"/>
        <end position="308"/>
    </location>
</feature>
<feature type="transmembrane region" description="Helical" evidence="2">
    <location>
        <begin position="317"/>
        <end position="339"/>
    </location>
</feature>
<feature type="transmembrane region" description="Helical" evidence="2">
    <location>
        <begin position="359"/>
        <end position="381"/>
    </location>
</feature>
<feature type="transmembrane region" description="Helical" evidence="2">
    <location>
        <begin position="388"/>
        <end position="410"/>
    </location>
</feature>
<feature type="transmembrane region" description="Helical" evidence="2">
    <location>
        <begin position="420"/>
        <end position="442"/>
    </location>
</feature>